<gene>
    <name type="primary">pou5f1.2</name>
    <name evidence="13" type="synonym">oct-91</name>
</gene>
<name>P5F12_XENLA</name>
<feature type="chain" id="PRO_0000390497" description="POU domain, class 5, transcription factor 1.2">
    <location>
        <begin position="1"/>
        <end position="445"/>
    </location>
</feature>
<feature type="domain" description="POU-specific" evidence="4">
    <location>
        <begin position="218"/>
        <end position="292"/>
    </location>
</feature>
<feature type="DNA-binding region" description="Homeobox" evidence="3">
    <location>
        <begin position="312"/>
        <end position="371"/>
    </location>
</feature>
<feature type="region of interest" description="Disordered" evidence="5">
    <location>
        <begin position="76"/>
        <end position="116"/>
    </location>
</feature>
<feature type="region of interest" description="Disordered" evidence="5">
    <location>
        <begin position="139"/>
        <end position="227"/>
    </location>
</feature>
<feature type="compositionally biased region" description="Polar residues" evidence="5">
    <location>
        <begin position="76"/>
        <end position="88"/>
    </location>
</feature>
<feature type="compositionally biased region" description="Polar residues" evidence="5">
    <location>
        <begin position="164"/>
        <end position="182"/>
    </location>
</feature>
<feature type="compositionally biased region" description="Low complexity" evidence="5">
    <location>
        <begin position="183"/>
        <end position="200"/>
    </location>
</feature>
<feature type="sequence conflict" description="In Ref. 3." evidence="11" ref="3">
    <original>G</original>
    <variation>A</variation>
    <location>
        <position position="248"/>
    </location>
</feature>
<feature type="sequence conflict" description="In Ref. 1; AAA49999." evidence="11" ref="1">
    <original>E</original>
    <variation>K</variation>
    <location>
        <position position="295"/>
    </location>
</feature>
<feature type="sequence conflict" description="In Ref. 3." evidence="11" ref="3">
    <original>Q</original>
    <variation>G</variation>
    <location>
        <position position="333"/>
    </location>
</feature>
<accession>B7ZQA9</accession>
<accession>Q03917</accession>
<accession>Q9PSI7</accession>
<organism>
    <name type="scientific">Xenopus laevis</name>
    <name type="common">African clawed frog</name>
    <dbReference type="NCBI Taxonomy" id="8355"/>
    <lineage>
        <taxon>Eukaryota</taxon>
        <taxon>Metazoa</taxon>
        <taxon>Chordata</taxon>
        <taxon>Craniata</taxon>
        <taxon>Vertebrata</taxon>
        <taxon>Euteleostomi</taxon>
        <taxon>Amphibia</taxon>
        <taxon>Batrachia</taxon>
        <taxon>Anura</taxon>
        <taxon>Pipoidea</taxon>
        <taxon>Pipidae</taxon>
        <taxon>Xenopodinae</taxon>
        <taxon>Xenopus</taxon>
        <taxon>Xenopus</taxon>
    </lineage>
</organism>
<keyword id="KW-0238">DNA-binding</keyword>
<keyword id="KW-0371">Homeobox</keyword>
<keyword id="KW-0539">Nucleus</keyword>
<keyword id="KW-1185">Reference proteome</keyword>
<sequence>MYNQQTYPSFTHNPALMPDGSGQYNLGTYTGMARHPHQAQAFFPFSGVKSDYGDLGGQTTSVGDTSAWNPLTSLDSANQLGISGQGNPFKNLKREREDDEEKSESPEPKCSPPSLPPAYYTHAWNPTTTFWSQVSSSGTTVVSKPLPTPLQPGDKCDPVEANKIFTSSPDKSGESGISSLDNSRCSSATSSSSGGTNVGTPRSLSRGASDGLSSDSEEEAPNSGEMEQFAKDLKHKRITMGYTQADVGYALGVLFGKTFSQTTICRFESLQLSFKNMCKLKPLLRSWLHEVENNENLQEIISRGQIIPQVQKRKHRTSIENNVKCTLENYFMQCSKPSAQEIAQIARELNMEKDVVRVWFCNRRQKGKRQVYPYIRENGGEPYDAPQTLTPPSQGPFPLPQVMPSQVFPTVPLGANPTIYVPTYHKNDMFPQAMHHGIGMGNQGN</sequence>
<comment type="function">
    <text evidence="7 8">Transcription factor that binds to the octamer motif (5'-ATTTGCAT-3'). Antagonizes the activity of nodal/activin signaling during gastrulation to suppress mesendoderm formation.</text>
</comment>
<comment type="subunit">
    <text evidence="9">Interacts with the transcription factors tcf7l1/tcf3 and vegt.</text>
</comment>
<comment type="subcellular location">
    <subcellularLocation>
        <location evidence="1 3 4">Nucleus</location>
    </subcellularLocation>
</comment>
<comment type="tissue specificity">
    <text evidence="6 8">Initially (stage 9) expressed in all regions of the embryo, becoming localized to the ventroposterior regions by early neurula stages. In adults, expressed at a low level in the brain.</text>
</comment>
<comment type="developmental stage">
    <text evidence="6 8">Expressed both maternally and zygotically. Expressed at low levels in oocytes, with expression increasing rapidly during gastrulation and peaking during late gastrulation before declining through neurulation.</text>
</comment>
<comment type="similarity">
    <text evidence="2">Belongs to the POU transcription factor family. Class-5 subfamily.</text>
</comment>
<reference evidence="11 12" key="1">
    <citation type="journal article" date="1992" name="Mol. Cell. Biol.">
        <title>Sequential expression of multiple POU proteins during amphibian early development.</title>
        <authorList>
            <person name="Hinkley C.S."/>
            <person name="Martin J.F."/>
            <person name="Leibham D."/>
            <person name="Perry M."/>
        </authorList>
    </citation>
    <scope>NUCLEOTIDE SEQUENCE [MRNA]</scope>
    <scope>FUNCTION</scope>
    <scope>TISSUE SPECIFICITY</scope>
    <scope>DEVELOPMENTAL STAGE</scope>
    <source>
        <tissue evidence="8">Gastrula</tissue>
    </source>
</reference>
<reference evidence="13" key="2">
    <citation type="submission" date="2008-11" db="EMBL/GenBank/DDBJ databases">
        <authorList>
            <consortium name="NIH - Xenopus Gene Collection (XGC) project"/>
        </authorList>
    </citation>
    <scope>NUCLEOTIDE SEQUENCE [LARGE SCALE MRNA]</scope>
    <source>
        <tissue evidence="13">Gastrula</tissue>
    </source>
</reference>
<reference evidence="11" key="3">
    <citation type="journal article" date="1992" name="Development">
        <title>Localized expression of a Xenopus POU gene depends on cell-autonomous transcriptional activation and induction-dependent inactivation.</title>
        <authorList>
            <person name="Frank D."/>
            <person name="Harland R.M."/>
        </authorList>
    </citation>
    <scope>NUCLEOTIDE SEQUENCE [MRNA] OF 236-362</scope>
    <scope>TISSUE SPECIFICITY</scope>
    <scope>DEVELOPMENTAL STAGE</scope>
    <source>
        <tissue evidence="6">Gastrula</tissue>
    </source>
</reference>
<reference evidence="11" key="4">
    <citation type="journal article" date="2006" name="Mech. Dev.">
        <title>Xenopus POU factors of subclass V inhibit activin/nodal signaling during gastrulation.</title>
        <authorList>
            <person name="Cao Y."/>
            <person name="Siegel D."/>
            <person name="Knochel W."/>
        </authorList>
    </citation>
    <scope>FUNCTION</scope>
</reference>
<reference evidence="11" key="5">
    <citation type="journal article" date="2007" name="EMBO J.">
        <title>POU-V factors antagonize maternal VegT activity and beta-Catenin signaling in Xenopus embryos.</title>
        <authorList>
            <person name="Cao Y."/>
            <person name="Siegel D."/>
            <person name="Donow C."/>
            <person name="Knochel S."/>
            <person name="Yuan L."/>
            <person name="Knochel W."/>
        </authorList>
    </citation>
    <scope>INTERACTION WITH TCF7L1 AND VEGT</scope>
</reference>
<dbReference type="EMBL" id="M60077">
    <property type="protein sequence ID" value="AAA49999.1"/>
    <property type="molecule type" value="mRNA"/>
</dbReference>
<dbReference type="EMBL" id="BC169741">
    <property type="protein sequence ID" value="AAI69741.1"/>
    <property type="molecule type" value="mRNA"/>
</dbReference>
<dbReference type="EMBL" id="BC169743">
    <property type="protein sequence ID" value="AAI69743.1"/>
    <property type="molecule type" value="mRNA"/>
</dbReference>
<dbReference type="PIR" id="C42022">
    <property type="entry name" value="C42022"/>
</dbReference>
<dbReference type="RefSeq" id="NP_001081342.1">
    <property type="nucleotide sequence ID" value="NM_001087873.1"/>
</dbReference>
<dbReference type="SMR" id="B7ZQA9"/>
<dbReference type="IntAct" id="B7ZQA9">
    <property type="interactions" value="2"/>
</dbReference>
<dbReference type="MINT" id="B7ZQA9"/>
<dbReference type="GeneID" id="397784"/>
<dbReference type="KEGG" id="xla:397784"/>
<dbReference type="AGR" id="Xenbase:XB-GENE-6252587"/>
<dbReference type="CTD" id="397784"/>
<dbReference type="Xenbase" id="XB-GENE-6252587">
    <property type="gene designation" value="pou5f3.L"/>
</dbReference>
<dbReference type="OMA" id="KNDMFPQ"/>
<dbReference type="OrthoDB" id="6358449at2759"/>
<dbReference type="Proteomes" id="UP000186698">
    <property type="component" value="Chromosome 8L"/>
</dbReference>
<dbReference type="Bgee" id="397784">
    <property type="expression patterns" value="Expressed in gastrula and 11 other cell types or tissues"/>
</dbReference>
<dbReference type="GO" id="GO:0005634">
    <property type="term" value="C:nucleus"/>
    <property type="evidence" value="ECO:0007669"/>
    <property type="project" value="UniProtKB-SubCell"/>
</dbReference>
<dbReference type="GO" id="GO:0005667">
    <property type="term" value="C:transcription regulator complex"/>
    <property type="evidence" value="ECO:0000353"/>
    <property type="project" value="UniProtKB"/>
</dbReference>
<dbReference type="GO" id="GO:0000981">
    <property type="term" value="F:DNA-binding transcription factor activity, RNA polymerase II-specific"/>
    <property type="evidence" value="ECO:0000318"/>
    <property type="project" value="GO_Central"/>
</dbReference>
<dbReference type="GO" id="GO:0140297">
    <property type="term" value="F:DNA-binding transcription factor binding"/>
    <property type="evidence" value="ECO:0000353"/>
    <property type="project" value="UniProtKB"/>
</dbReference>
<dbReference type="GO" id="GO:0000978">
    <property type="term" value="F:RNA polymerase II cis-regulatory region sequence-specific DNA binding"/>
    <property type="evidence" value="ECO:0000318"/>
    <property type="project" value="GO_Central"/>
</dbReference>
<dbReference type="GO" id="GO:0043565">
    <property type="term" value="F:sequence-specific DNA binding"/>
    <property type="evidence" value="ECO:0000314"/>
    <property type="project" value="UniProtKB"/>
</dbReference>
<dbReference type="GO" id="GO:0007369">
    <property type="term" value="P:gastrulation"/>
    <property type="evidence" value="ECO:0000315"/>
    <property type="project" value="UniProtKB"/>
</dbReference>
<dbReference type="GO" id="GO:0001702">
    <property type="term" value="P:gastrulation with mouth forming second"/>
    <property type="evidence" value="ECO:0000315"/>
    <property type="project" value="Xenbase"/>
</dbReference>
<dbReference type="GO" id="GO:0006357">
    <property type="term" value="P:regulation of transcription by RNA polymerase II"/>
    <property type="evidence" value="ECO:0000318"/>
    <property type="project" value="GO_Central"/>
</dbReference>
<dbReference type="CDD" id="cd00086">
    <property type="entry name" value="homeodomain"/>
    <property type="match status" value="1"/>
</dbReference>
<dbReference type="FunFam" id="1.10.260.40:FF:000022">
    <property type="entry name" value="POU domain protein"/>
    <property type="match status" value="1"/>
</dbReference>
<dbReference type="Gene3D" id="1.10.10.60">
    <property type="entry name" value="Homeodomain-like"/>
    <property type="match status" value="1"/>
</dbReference>
<dbReference type="Gene3D" id="1.10.260.40">
    <property type="entry name" value="lambda repressor-like DNA-binding domains"/>
    <property type="match status" value="1"/>
</dbReference>
<dbReference type="InterPro" id="IPR001356">
    <property type="entry name" value="HD"/>
</dbReference>
<dbReference type="InterPro" id="IPR017970">
    <property type="entry name" value="Homeobox_CS"/>
</dbReference>
<dbReference type="InterPro" id="IPR009057">
    <property type="entry name" value="Homeodomain-like_sf"/>
</dbReference>
<dbReference type="InterPro" id="IPR010982">
    <property type="entry name" value="Lambda_DNA-bd_dom_sf"/>
</dbReference>
<dbReference type="InterPro" id="IPR013847">
    <property type="entry name" value="POU"/>
</dbReference>
<dbReference type="InterPro" id="IPR000327">
    <property type="entry name" value="POU_dom"/>
</dbReference>
<dbReference type="InterPro" id="IPR050255">
    <property type="entry name" value="POU_domain_TF"/>
</dbReference>
<dbReference type="PANTHER" id="PTHR11636">
    <property type="entry name" value="POU DOMAIN"/>
    <property type="match status" value="1"/>
</dbReference>
<dbReference type="PANTHER" id="PTHR11636:SF135">
    <property type="entry name" value="POU DOMAIN, CLASS 5, TRANSCRIPTION FACTOR 1.2"/>
    <property type="match status" value="1"/>
</dbReference>
<dbReference type="Pfam" id="PF00046">
    <property type="entry name" value="Homeodomain"/>
    <property type="match status" value="1"/>
</dbReference>
<dbReference type="Pfam" id="PF00157">
    <property type="entry name" value="Pou"/>
    <property type="match status" value="1"/>
</dbReference>
<dbReference type="PRINTS" id="PR00028">
    <property type="entry name" value="POUDOMAIN"/>
</dbReference>
<dbReference type="SMART" id="SM00389">
    <property type="entry name" value="HOX"/>
    <property type="match status" value="1"/>
</dbReference>
<dbReference type="SMART" id="SM00352">
    <property type="entry name" value="POU"/>
    <property type="match status" value="1"/>
</dbReference>
<dbReference type="SUPFAM" id="SSF46689">
    <property type="entry name" value="Homeodomain-like"/>
    <property type="match status" value="1"/>
</dbReference>
<dbReference type="SUPFAM" id="SSF47413">
    <property type="entry name" value="lambda repressor-like DNA-binding domains"/>
    <property type="match status" value="1"/>
</dbReference>
<dbReference type="PROSITE" id="PS00027">
    <property type="entry name" value="HOMEOBOX_1"/>
    <property type="match status" value="1"/>
</dbReference>
<dbReference type="PROSITE" id="PS50071">
    <property type="entry name" value="HOMEOBOX_2"/>
    <property type="match status" value="1"/>
</dbReference>
<dbReference type="PROSITE" id="PS00465">
    <property type="entry name" value="POU_2"/>
    <property type="match status" value="1"/>
</dbReference>
<dbReference type="PROSITE" id="PS51179">
    <property type="entry name" value="POU_3"/>
    <property type="match status" value="1"/>
</dbReference>
<evidence type="ECO:0000250" key="1">
    <source>
        <dbReference type="UniProtKB" id="Q01860"/>
    </source>
</evidence>
<evidence type="ECO:0000255" key="2"/>
<evidence type="ECO:0000255" key="3">
    <source>
        <dbReference type="PROSITE-ProRule" id="PRU00108"/>
    </source>
</evidence>
<evidence type="ECO:0000255" key="4">
    <source>
        <dbReference type="PROSITE-ProRule" id="PRU00530"/>
    </source>
</evidence>
<evidence type="ECO:0000256" key="5">
    <source>
        <dbReference type="SAM" id="MobiDB-lite"/>
    </source>
</evidence>
<evidence type="ECO:0000269" key="6">
    <source>
    </source>
</evidence>
<evidence type="ECO:0000269" key="7">
    <source>
    </source>
</evidence>
<evidence type="ECO:0000269" key="8">
    <source>
    </source>
</evidence>
<evidence type="ECO:0000269" key="9">
    <source>
    </source>
</evidence>
<evidence type="ECO:0000303" key="10">
    <source>
    </source>
</evidence>
<evidence type="ECO:0000305" key="11"/>
<evidence type="ECO:0000312" key="12">
    <source>
        <dbReference type="EMBL" id="AAA49999.1"/>
    </source>
</evidence>
<evidence type="ECO:0000312" key="13">
    <source>
        <dbReference type="EMBL" id="AAI69741.1"/>
    </source>
</evidence>
<proteinExistence type="evidence at protein level"/>
<protein>
    <recommendedName>
        <fullName>POU domain, class 5, transcription factor 1.2</fullName>
    </recommendedName>
    <alternativeName>
        <fullName evidence="10">POU class V protein oct-91</fullName>
        <shortName>XlPOU91</shortName>
        <shortName evidence="13">Xoct-91</shortName>
    </alternativeName>
</protein>